<feature type="chain" id="PRO_0000234842" description="Large ribosomal subunit protein uL10">
    <location>
        <begin position="1"/>
        <end position="170"/>
    </location>
</feature>
<evidence type="ECO:0000255" key="1">
    <source>
        <dbReference type="HAMAP-Rule" id="MF_00362"/>
    </source>
</evidence>
<evidence type="ECO:0000305" key="2"/>
<proteinExistence type="inferred from homology"/>
<reference key="1">
    <citation type="journal article" date="2005" name="Genome Res.">
        <title>The Chlamydophila abortus genome sequence reveals an array of variable proteins that contribute to interspecies variation.</title>
        <authorList>
            <person name="Thomson N.R."/>
            <person name="Yeats C."/>
            <person name="Bell K."/>
            <person name="Holden M.T.G."/>
            <person name="Bentley S.D."/>
            <person name="Livingstone M."/>
            <person name="Cerdeno-Tarraga A.-M."/>
            <person name="Harris B."/>
            <person name="Doggett J."/>
            <person name="Ormond D."/>
            <person name="Mungall K."/>
            <person name="Clarke K."/>
            <person name="Feltwell T."/>
            <person name="Hance Z."/>
            <person name="Sanders M."/>
            <person name="Quail M.A."/>
            <person name="Price C."/>
            <person name="Barrell B.G."/>
            <person name="Parkhill J."/>
            <person name="Longbottom D."/>
        </authorList>
    </citation>
    <scope>NUCLEOTIDE SEQUENCE [LARGE SCALE GENOMIC DNA]</scope>
    <source>
        <strain>DSM 27085 / S26/3</strain>
    </source>
</reference>
<keyword id="KW-0687">Ribonucleoprotein</keyword>
<keyword id="KW-0689">Ribosomal protein</keyword>
<keyword id="KW-0694">RNA-binding</keyword>
<keyword id="KW-0699">rRNA-binding</keyword>
<organism>
    <name type="scientific">Chlamydia abortus (strain DSM 27085 / S26/3)</name>
    <name type="common">Chlamydophila abortus</name>
    <dbReference type="NCBI Taxonomy" id="218497"/>
    <lineage>
        <taxon>Bacteria</taxon>
        <taxon>Pseudomonadati</taxon>
        <taxon>Chlamydiota</taxon>
        <taxon>Chlamydiia</taxon>
        <taxon>Chlamydiales</taxon>
        <taxon>Chlamydiaceae</taxon>
        <taxon>Chlamydia/Chlamydophila group</taxon>
        <taxon>Chlamydia</taxon>
    </lineage>
</organism>
<protein>
    <recommendedName>
        <fullName evidence="1">Large ribosomal subunit protein uL10</fullName>
    </recommendedName>
    <alternativeName>
        <fullName evidence="2">50S ribosomal protein L10</fullName>
    </alternativeName>
</protein>
<gene>
    <name evidence="1" type="primary">rplJ</name>
    <name type="ordered locus">CAB663</name>
</gene>
<accession>Q5L5I1</accession>
<dbReference type="EMBL" id="CR848038">
    <property type="protein sequence ID" value="CAH64110.1"/>
    <property type="molecule type" value="Genomic_DNA"/>
</dbReference>
<dbReference type="RefSeq" id="WP_006344280.1">
    <property type="nucleotide sequence ID" value="NC_004552.2"/>
</dbReference>
<dbReference type="SMR" id="Q5L5I1"/>
<dbReference type="GeneID" id="93024213"/>
<dbReference type="KEGG" id="cab:CAB663"/>
<dbReference type="eggNOG" id="COG0244">
    <property type="taxonomic scope" value="Bacteria"/>
</dbReference>
<dbReference type="HOGENOM" id="CLU_092227_1_2_0"/>
<dbReference type="OrthoDB" id="18754at2"/>
<dbReference type="Proteomes" id="UP000001012">
    <property type="component" value="Chromosome"/>
</dbReference>
<dbReference type="GO" id="GO:0015934">
    <property type="term" value="C:large ribosomal subunit"/>
    <property type="evidence" value="ECO:0007669"/>
    <property type="project" value="InterPro"/>
</dbReference>
<dbReference type="GO" id="GO:0070180">
    <property type="term" value="F:large ribosomal subunit rRNA binding"/>
    <property type="evidence" value="ECO:0007669"/>
    <property type="project" value="UniProtKB-UniRule"/>
</dbReference>
<dbReference type="GO" id="GO:0003735">
    <property type="term" value="F:structural constituent of ribosome"/>
    <property type="evidence" value="ECO:0007669"/>
    <property type="project" value="InterPro"/>
</dbReference>
<dbReference type="GO" id="GO:0006412">
    <property type="term" value="P:translation"/>
    <property type="evidence" value="ECO:0007669"/>
    <property type="project" value="UniProtKB-UniRule"/>
</dbReference>
<dbReference type="CDD" id="cd05797">
    <property type="entry name" value="Ribosomal_L10"/>
    <property type="match status" value="1"/>
</dbReference>
<dbReference type="Gene3D" id="3.30.70.1730">
    <property type="match status" value="1"/>
</dbReference>
<dbReference type="Gene3D" id="6.10.250.290">
    <property type="match status" value="1"/>
</dbReference>
<dbReference type="HAMAP" id="MF_00362">
    <property type="entry name" value="Ribosomal_uL10"/>
    <property type="match status" value="1"/>
</dbReference>
<dbReference type="InterPro" id="IPR001790">
    <property type="entry name" value="Ribosomal_uL10"/>
</dbReference>
<dbReference type="InterPro" id="IPR043141">
    <property type="entry name" value="Ribosomal_uL10-like_sf"/>
</dbReference>
<dbReference type="InterPro" id="IPR022973">
    <property type="entry name" value="Ribosomal_uL10_bac"/>
</dbReference>
<dbReference type="InterPro" id="IPR047865">
    <property type="entry name" value="Ribosomal_uL10_bac_type"/>
</dbReference>
<dbReference type="InterPro" id="IPR002363">
    <property type="entry name" value="Ribosomal_uL10_CS_bac"/>
</dbReference>
<dbReference type="NCBIfam" id="NF000955">
    <property type="entry name" value="PRK00099.1-1"/>
    <property type="match status" value="1"/>
</dbReference>
<dbReference type="PANTHER" id="PTHR11560">
    <property type="entry name" value="39S RIBOSOMAL PROTEIN L10, MITOCHONDRIAL"/>
    <property type="match status" value="1"/>
</dbReference>
<dbReference type="Pfam" id="PF00466">
    <property type="entry name" value="Ribosomal_L10"/>
    <property type="match status" value="1"/>
</dbReference>
<dbReference type="SUPFAM" id="SSF160369">
    <property type="entry name" value="Ribosomal protein L10-like"/>
    <property type="match status" value="1"/>
</dbReference>
<dbReference type="PROSITE" id="PS01109">
    <property type="entry name" value="RIBOSOMAL_L10"/>
    <property type="match status" value="1"/>
</dbReference>
<comment type="function">
    <text evidence="1">Forms part of the ribosomal stalk, playing a central role in the interaction of the ribosome with GTP-bound translation factors.</text>
</comment>
<comment type="subunit">
    <text evidence="1">Part of the ribosomal stalk of the 50S ribosomal subunit. The N-terminus interacts with L11 and the large rRNA to form the base of the stalk. The C-terminus forms an elongated spine to which L12 dimers bind in a sequential fashion forming a multimeric L10(L12)X complex.</text>
</comment>
<comment type="similarity">
    <text evidence="1">Belongs to the universal ribosomal protein uL10 family.</text>
</comment>
<name>RL10_CHLAB</name>
<sequence length="170" mass="18568">MKEEKKLLLREVEEKISASQGFILLRYLGFTAAHSREFRNSLSGVSAEFEVLKKRIFFKAMQSAGFDIDSSDTSGHLGVVFAYDDAVSAAKQVLDFNKQYNDSLVFLAGRIDSANLSGKEVEAVAKLPSMKELRQQIVGLLAAPMSQVVGIMGSALSGVISCIDQKTQKN</sequence>